<name>HGD_XANE5</name>
<sequence length="439" mass="48511">MPMHDQTSYMTGFGNEFATEAVAGSLPVGQNSPQRVAHGLYAEQLSGTAFTAPRGENRRSWLYRIRPAAVHGRFSLIEQSRLHNDFGGGPVPPDQMRWSPLPLPATRTDFVDGLYTMAGNGSPEAMTGVAVHLYAANASMRDRFFYNADGELLLVPQLGRLRVCTELGVLELEPQQIGVIPRGLRFRVELLDSEARGYVCENFGGLLRLPELGPIGANGLANPRDFQTPRAAFEQREGRFELVAKFQGHLWRADIGHSPLDVVAWHGNYAPYRYDLRRFNTIGSISFDHPDPSIFTVLTSPSDTHGTANMDFAIFPPRWLVAQHTFRPPWFHRNVASEFMGLVHGVYDAKAEGFAPGGASLHNCMSGHGPDAATFDKASQADLTRPDVIADTMAFMFETRAVLRPTQQALNAAHRQADYQQCWSGLRAAFQPPTTEDAT</sequence>
<comment type="function">
    <text evidence="1">Involved in the catabolism of homogentisate (2,5-dihydroxyphenylacetate or 2,5-OH-PhAc), a central intermediate in the degradation of phenylalanine and tyrosine. Catalyzes the oxidative ring cleavage of the aromatic ring of homogentisate to yield maleylacetoacetate.</text>
</comment>
<comment type="catalytic activity">
    <reaction evidence="1">
        <text>homogentisate + O2 = 4-maleylacetoacetate + H(+)</text>
        <dbReference type="Rhea" id="RHEA:15449"/>
        <dbReference type="ChEBI" id="CHEBI:15378"/>
        <dbReference type="ChEBI" id="CHEBI:15379"/>
        <dbReference type="ChEBI" id="CHEBI:16169"/>
        <dbReference type="ChEBI" id="CHEBI:17105"/>
        <dbReference type="EC" id="1.13.11.5"/>
    </reaction>
</comment>
<comment type="cofactor">
    <cofactor evidence="1">
        <name>Fe cation</name>
        <dbReference type="ChEBI" id="CHEBI:24875"/>
    </cofactor>
</comment>
<comment type="pathway">
    <text evidence="1">Amino-acid degradation; L-phenylalanine degradation; acetoacetate and fumarate from L-phenylalanine: step 4/6.</text>
</comment>
<comment type="subunit">
    <text evidence="1">Hexamer; dimer of trimers.</text>
</comment>
<comment type="similarity">
    <text evidence="1">Belongs to the homogentisate dioxygenase family.</text>
</comment>
<proteinExistence type="inferred from homology"/>
<keyword id="KW-0223">Dioxygenase</keyword>
<keyword id="KW-0408">Iron</keyword>
<keyword id="KW-0479">Metal-binding</keyword>
<keyword id="KW-0560">Oxidoreductase</keyword>
<keyword id="KW-0585">Phenylalanine catabolism</keyword>
<keyword id="KW-0828">Tyrosine catabolism</keyword>
<feature type="chain" id="PRO_0000225797" description="Homogentisate 1,2-dioxygenase">
    <location>
        <begin position="1"/>
        <end position="439"/>
    </location>
</feature>
<feature type="active site" description="Proton acceptor" evidence="1">
    <location>
        <position position="289"/>
    </location>
</feature>
<feature type="binding site" evidence="1">
    <location>
        <position position="332"/>
    </location>
    <ligand>
        <name>Fe cation</name>
        <dbReference type="ChEBI" id="CHEBI:24875"/>
    </ligand>
</feature>
<feature type="binding site" evidence="1">
    <location>
        <position position="338"/>
    </location>
    <ligand>
        <name>Fe cation</name>
        <dbReference type="ChEBI" id="CHEBI:24875"/>
    </ligand>
</feature>
<feature type="binding site" evidence="1">
    <location>
        <position position="347"/>
    </location>
    <ligand>
        <name>homogentisate</name>
        <dbReference type="ChEBI" id="CHEBI:16169"/>
    </ligand>
</feature>
<feature type="binding site" evidence="1">
    <location>
        <position position="368"/>
    </location>
    <ligand>
        <name>Fe cation</name>
        <dbReference type="ChEBI" id="CHEBI:24875"/>
    </ligand>
</feature>
<feature type="binding site" evidence="1">
    <location>
        <position position="368"/>
    </location>
    <ligand>
        <name>homogentisate</name>
        <dbReference type="ChEBI" id="CHEBI:16169"/>
    </ligand>
</feature>
<protein>
    <recommendedName>
        <fullName evidence="1">Homogentisate 1,2-dioxygenase</fullName>
        <shortName evidence="1">HGDO</shortName>
        <ecNumber evidence="1">1.13.11.5</ecNumber>
    </recommendedName>
    <alternativeName>
        <fullName evidence="1">Homogentisate oxygenase</fullName>
    </alternativeName>
    <alternativeName>
        <fullName evidence="1">Homogentisic acid oxidase</fullName>
    </alternativeName>
    <alternativeName>
        <fullName evidence="1">Homogentisicase</fullName>
    </alternativeName>
</protein>
<reference key="1">
    <citation type="journal article" date="2005" name="J. Bacteriol.">
        <title>Insights into genome plasticity and pathogenicity of the plant pathogenic Bacterium Xanthomonas campestris pv. vesicatoria revealed by the complete genome sequence.</title>
        <authorList>
            <person name="Thieme F."/>
            <person name="Koebnik R."/>
            <person name="Bekel T."/>
            <person name="Berger C."/>
            <person name="Boch J."/>
            <person name="Buettner D."/>
            <person name="Caldana C."/>
            <person name="Gaigalat L."/>
            <person name="Goesmann A."/>
            <person name="Kay S."/>
            <person name="Kirchner O."/>
            <person name="Lanz C."/>
            <person name="Linke B."/>
            <person name="McHardy A.C."/>
            <person name="Meyer F."/>
            <person name="Mittenhuber G."/>
            <person name="Nies D.H."/>
            <person name="Niesbach-Kloesgen U."/>
            <person name="Patschkowski T."/>
            <person name="Rueckert C."/>
            <person name="Rupp O."/>
            <person name="Schneiker S."/>
            <person name="Schuster S.C."/>
            <person name="Vorhoelter F.J."/>
            <person name="Weber E."/>
            <person name="Puehler A."/>
            <person name="Bonas U."/>
            <person name="Bartels D."/>
            <person name="Kaiser O."/>
        </authorList>
    </citation>
    <scope>NUCLEOTIDE SEQUENCE [LARGE SCALE GENOMIC DNA]</scope>
    <source>
        <strain>85-10</strain>
    </source>
</reference>
<dbReference type="EC" id="1.13.11.5" evidence="1"/>
<dbReference type="EMBL" id="AM039952">
    <property type="protein sequence ID" value="CAJ22115.1"/>
    <property type="molecule type" value="Genomic_DNA"/>
</dbReference>
<dbReference type="SMR" id="Q3BYE8"/>
<dbReference type="STRING" id="456327.BJD11_20455"/>
<dbReference type="KEGG" id="xcv:XCV0484"/>
<dbReference type="eggNOG" id="COG3508">
    <property type="taxonomic scope" value="Bacteria"/>
</dbReference>
<dbReference type="HOGENOM" id="CLU_027174_0_0_6"/>
<dbReference type="UniPathway" id="UPA00139">
    <property type="reaction ID" value="UER00339"/>
</dbReference>
<dbReference type="Proteomes" id="UP000007069">
    <property type="component" value="Chromosome"/>
</dbReference>
<dbReference type="GO" id="GO:0005737">
    <property type="term" value="C:cytoplasm"/>
    <property type="evidence" value="ECO:0007669"/>
    <property type="project" value="TreeGrafter"/>
</dbReference>
<dbReference type="GO" id="GO:0004411">
    <property type="term" value="F:homogentisate 1,2-dioxygenase activity"/>
    <property type="evidence" value="ECO:0007669"/>
    <property type="project" value="UniProtKB-UniRule"/>
</dbReference>
<dbReference type="GO" id="GO:0005506">
    <property type="term" value="F:iron ion binding"/>
    <property type="evidence" value="ECO:0007669"/>
    <property type="project" value="UniProtKB-UniRule"/>
</dbReference>
<dbReference type="GO" id="GO:0006559">
    <property type="term" value="P:L-phenylalanine catabolic process"/>
    <property type="evidence" value="ECO:0007669"/>
    <property type="project" value="UniProtKB-UniRule"/>
</dbReference>
<dbReference type="GO" id="GO:0006572">
    <property type="term" value="P:tyrosine catabolic process"/>
    <property type="evidence" value="ECO:0007669"/>
    <property type="project" value="UniProtKB-UniRule"/>
</dbReference>
<dbReference type="CDD" id="cd07000">
    <property type="entry name" value="cupin_HGO_N"/>
    <property type="match status" value="1"/>
</dbReference>
<dbReference type="FunFam" id="2.60.120.10:FF:000053">
    <property type="entry name" value="Homogentisate 1,2-dioxygenase"/>
    <property type="match status" value="1"/>
</dbReference>
<dbReference type="Gene3D" id="2.60.120.10">
    <property type="entry name" value="Jelly Rolls"/>
    <property type="match status" value="1"/>
</dbReference>
<dbReference type="HAMAP" id="MF_00334">
    <property type="entry name" value="Homogentis_dioxygen"/>
    <property type="match status" value="1"/>
</dbReference>
<dbReference type="InterPro" id="IPR046451">
    <property type="entry name" value="HgmA_C"/>
</dbReference>
<dbReference type="InterPro" id="IPR046452">
    <property type="entry name" value="HgmA_N"/>
</dbReference>
<dbReference type="InterPro" id="IPR005708">
    <property type="entry name" value="Homogentis_dOase"/>
</dbReference>
<dbReference type="InterPro" id="IPR022950">
    <property type="entry name" value="Homogentis_dOase_bac"/>
</dbReference>
<dbReference type="InterPro" id="IPR014710">
    <property type="entry name" value="RmlC-like_jellyroll"/>
</dbReference>
<dbReference type="InterPro" id="IPR011051">
    <property type="entry name" value="RmlC_Cupin_sf"/>
</dbReference>
<dbReference type="NCBIfam" id="TIGR01015">
    <property type="entry name" value="hmgA"/>
    <property type="match status" value="1"/>
</dbReference>
<dbReference type="PANTHER" id="PTHR11056">
    <property type="entry name" value="HOMOGENTISATE 1,2-DIOXYGENASE"/>
    <property type="match status" value="1"/>
</dbReference>
<dbReference type="PANTHER" id="PTHR11056:SF0">
    <property type="entry name" value="HOMOGENTISATE 1,2-DIOXYGENASE"/>
    <property type="match status" value="1"/>
</dbReference>
<dbReference type="Pfam" id="PF04209">
    <property type="entry name" value="HgmA_C"/>
    <property type="match status" value="1"/>
</dbReference>
<dbReference type="Pfam" id="PF20510">
    <property type="entry name" value="HgmA_N"/>
    <property type="match status" value="1"/>
</dbReference>
<dbReference type="SUPFAM" id="SSF51182">
    <property type="entry name" value="RmlC-like cupins"/>
    <property type="match status" value="1"/>
</dbReference>
<gene>
    <name evidence="1" type="primary">hmgA</name>
    <name type="ordered locus">XCV0484</name>
</gene>
<evidence type="ECO:0000255" key="1">
    <source>
        <dbReference type="HAMAP-Rule" id="MF_00334"/>
    </source>
</evidence>
<organism>
    <name type="scientific">Xanthomonas euvesicatoria pv. vesicatoria (strain 85-10)</name>
    <name type="common">Xanthomonas campestris pv. vesicatoria</name>
    <dbReference type="NCBI Taxonomy" id="316273"/>
    <lineage>
        <taxon>Bacteria</taxon>
        <taxon>Pseudomonadati</taxon>
        <taxon>Pseudomonadota</taxon>
        <taxon>Gammaproteobacteria</taxon>
        <taxon>Lysobacterales</taxon>
        <taxon>Lysobacteraceae</taxon>
        <taxon>Xanthomonas</taxon>
    </lineage>
</organism>
<accession>Q3BYE8</accession>